<gene>
    <name evidence="1" type="primary">rpiA</name>
    <name type="ordered locus">SP70585_0864</name>
</gene>
<name>RPIA_STRP7</name>
<feature type="chain" id="PRO_1000194723" description="Ribose-5-phosphate isomerase A">
    <location>
        <begin position="1"/>
        <end position="227"/>
    </location>
</feature>
<feature type="active site" description="Proton acceptor" evidence="1">
    <location>
        <position position="104"/>
    </location>
</feature>
<feature type="binding site" evidence="1">
    <location>
        <begin position="26"/>
        <end position="29"/>
    </location>
    <ligand>
        <name>substrate</name>
    </ligand>
</feature>
<feature type="binding site" evidence="1">
    <location>
        <begin position="82"/>
        <end position="85"/>
    </location>
    <ligand>
        <name>substrate</name>
    </ligand>
</feature>
<feature type="binding site" evidence="1">
    <location>
        <begin position="95"/>
        <end position="98"/>
    </location>
    <ligand>
        <name>substrate</name>
    </ligand>
</feature>
<feature type="binding site" evidence="1">
    <location>
        <position position="122"/>
    </location>
    <ligand>
        <name>substrate</name>
    </ligand>
</feature>
<proteinExistence type="inferred from homology"/>
<comment type="function">
    <text evidence="1">Catalyzes the reversible conversion of ribose-5-phosphate to ribulose 5-phosphate.</text>
</comment>
<comment type="catalytic activity">
    <reaction evidence="1">
        <text>aldehydo-D-ribose 5-phosphate = D-ribulose 5-phosphate</text>
        <dbReference type="Rhea" id="RHEA:14657"/>
        <dbReference type="ChEBI" id="CHEBI:58121"/>
        <dbReference type="ChEBI" id="CHEBI:58273"/>
        <dbReference type="EC" id="5.3.1.6"/>
    </reaction>
</comment>
<comment type="pathway">
    <text evidence="1">Carbohydrate degradation; pentose phosphate pathway; D-ribose 5-phosphate from D-ribulose 5-phosphate (non-oxidative stage): step 1/1.</text>
</comment>
<comment type="subunit">
    <text evidence="1">Homodimer.</text>
</comment>
<comment type="similarity">
    <text evidence="1">Belongs to the ribose 5-phosphate isomerase family.</text>
</comment>
<protein>
    <recommendedName>
        <fullName evidence="1">Ribose-5-phosphate isomerase A</fullName>
        <ecNumber evidence="1">5.3.1.6</ecNumber>
    </recommendedName>
    <alternativeName>
        <fullName evidence="1">Phosphoriboisomerase A</fullName>
        <shortName evidence="1">PRI</shortName>
    </alternativeName>
</protein>
<evidence type="ECO:0000255" key="1">
    <source>
        <dbReference type="HAMAP-Rule" id="MF_00170"/>
    </source>
</evidence>
<reference key="1">
    <citation type="journal article" date="2010" name="Genome Biol.">
        <title>Structure and dynamics of the pan-genome of Streptococcus pneumoniae and closely related species.</title>
        <authorList>
            <person name="Donati C."/>
            <person name="Hiller N.L."/>
            <person name="Tettelin H."/>
            <person name="Muzzi A."/>
            <person name="Croucher N.J."/>
            <person name="Angiuoli S.V."/>
            <person name="Oggioni M."/>
            <person name="Dunning Hotopp J.C."/>
            <person name="Hu F.Z."/>
            <person name="Riley D.R."/>
            <person name="Covacci A."/>
            <person name="Mitchell T.J."/>
            <person name="Bentley S.D."/>
            <person name="Kilian M."/>
            <person name="Ehrlich G.D."/>
            <person name="Rappuoli R."/>
            <person name="Moxon E.R."/>
            <person name="Masignani V."/>
        </authorList>
    </citation>
    <scope>NUCLEOTIDE SEQUENCE [LARGE SCALE GENOMIC DNA]</scope>
    <source>
        <strain>70585</strain>
    </source>
</reference>
<dbReference type="EC" id="5.3.1.6" evidence="1"/>
<dbReference type="EMBL" id="CP000918">
    <property type="protein sequence ID" value="ACO16710.1"/>
    <property type="molecule type" value="Genomic_DNA"/>
</dbReference>
<dbReference type="RefSeq" id="WP_000429299.1">
    <property type="nucleotide sequence ID" value="NC_012468.1"/>
</dbReference>
<dbReference type="SMR" id="C1C6G3"/>
<dbReference type="GeneID" id="45653812"/>
<dbReference type="KEGG" id="snm:SP70585_0864"/>
<dbReference type="HOGENOM" id="CLU_056590_1_0_9"/>
<dbReference type="UniPathway" id="UPA00115">
    <property type="reaction ID" value="UER00412"/>
</dbReference>
<dbReference type="Proteomes" id="UP000002211">
    <property type="component" value="Chromosome"/>
</dbReference>
<dbReference type="GO" id="GO:0004751">
    <property type="term" value="F:ribose-5-phosphate isomerase activity"/>
    <property type="evidence" value="ECO:0007669"/>
    <property type="project" value="UniProtKB-UniRule"/>
</dbReference>
<dbReference type="GO" id="GO:0009052">
    <property type="term" value="P:pentose-phosphate shunt, non-oxidative branch"/>
    <property type="evidence" value="ECO:0007669"/>
    <property type="project" value="UniProtKB-UniRule"/>
</dbReference>
<dbReference type="CDD" id="cd01398">
    <property type="entry name" value="RPI_A"/>
    <property type="match status" value="1"/>
</dbReference>
<dbReference type="FunFam" id="3.40.50.1360:FF:000001">
    <property type="entry name" value="Ribose-5-phosphate isomerase A"/>
    <property type="match status" value="1"/>
</dbReference>
<dbReference type="Gene3D" id="3.30.70.260">
    <property type="match status" value="1"/>
</dbReference>
<dbReference type="Gene3D" id="3.40.50.1360">
    <property type="match status" value="1"/>
</dbReference>
<dbReference type="HAMAP" id="MF_00170">
    <property type="entry name" value="Rib_5P_isom_A"/>
    <property type="match status" value="1"/>
</dbReference>
<dbReference type="InterPro" id="IPR037171">
    <property type="entry name" value="NagB/RpiA_transferase-like"/>
</dbReference>
<dbReference type="InterPro" id="IPR050262">
    <property type="entry name" value="Ribose-5P_isomerase"/>
</dbReference>
<dbReference type="InterPro" id="IPR020672">
    <property type="entry name" value="Ribose5P_isomerase_typA_subgr"/>
</dbReference>
<dbReference type="InterPro" id="IPR004788">
    <property type="entry name" value="Ribose5P_isomerase_type_A"/>
</dbReference>
<dbReference type="NCBIfam" id="NF001924">
    <property type="entry name" value="PRK00702.1"/>
    <property type="match status" value="1"/>
</dbReference>
<dbReference type="NCBIfam" id="TIGR00021">
    <property type="entry name" value="rpiA"/>
    <property type="match status" value="1"/>
</dbReference>
<dbReference type="PANTHER" id="PTHR43748">
    <property type="entry name" value="RIBOSE-5-PHOSPHATE ISOMERASE 3, CHLOROPLASTIC-RELATED"/>
    <property type="match status" value="1"/>
</dbReference>
<dbReference type="PANTHER" id="PTHR43748:SF3">
    <property type="entry name" value="RIBOSE-5-PHOSPHATE ISOMERASE 3, CHLOROPLASTIC-RELATED"/>
    <property type="match status" value="1"/>
</dbReference>
<dbReference type="Pfam" id="PF06026">
    <property type="entry name" value="Rib_5-P_isom_A"/>
    <property type="match status" value="1"/>
</dbReference>
<dbReference type="SUPFAM" id="SSF75445">
    <property type="entry name" value="D-ribose-5-phosphate isomerase (RpiA), lid domain"/>
    <property type="match status" value="1"/>
</dbReference>
<dbReference type="SUPFAM" id="SSF100950">
    <property type="entry name" value="NagB/RpiA/CoA transferase-like"/>
    <property type="match status" value="1"/>
</dbReference>
<organism>
    <name type="scientific">Streptococcus pneumoniae (strain 70585)</name>
    <dbReference type="NCBI Taxonomy" id="488221"/>
    <lineage>
        <taxon>Bacteria</taxon>
        <taxon>Bacillati</taxon>
        <taxon>Bacillota</taxon>
        <taxon>Bacilli</taxon>
        <taxon>Lactobacillales</taxon>
        <taxon>Streptococcaceae</taxon>
        <taxon>Streptococcus</taxon>
    </lineage>
</organism>
<sequence length="227" mass="24792">MENLKKMAGIKAAEFVSDGMVVGLGTGSTAYYFVEEIGRRIKEEGLQITAVTTSSVTTKQAEGLNIPLKSIDQVDFVDVTVDGADEVDSQFNGIKGGGGALLMEKVVATPSKEYIWVVDESKLVEKLGAFKLPVEVVQYGAEQVFRHFERAGYKPSFREKDGQRFVTDMQNFIIDLALDVIENPIAFGQELDHVVGVVEHGLFNQMVDKVIVAGRDGVQISTSKKGK</sequence>
<accession>C1C6G3</accession>
<keyword id="KW-0413">Isomerase</keyword>